<sequence>MSQEKQVFSIDLAGRQLTIETSQLAKQANGAVLVRYGDTAVLSTATASKEPKNVDFFPLTVNYEERLYAVGKIPGGFIKREGRPSEKAILASRLIDRPIRPLFADGFRNEVQVVSIVMSVDQDCSSEMAAMLGSSLALSISDIPFEGPIAGATVGRINGEFVINPTVEQQEQSDMHLVVAGTKDAINMVEAGADQVPEETMLEAIMFGHDEIKRLIAFQEEIVQAVGKEKTAVKLYEVDADLNQAVREMAETDMHSAIQVHEKHAREDAISVVKKRVIEHYEAEEADADTLGQVSEILYKIVKEEVRRLITVEKIRPDGRKGDEIRPLASEVGILSRTHGSGLFTRGQTQALSICTLGALGDVQILDGLGVEESKRFMHHYNFPSFSVGETRPMRGPGRREIGHGALGERALEPVLPSEKDFPYTVRLVSEVLESNGSTSQASICGSTLAMMDAGVPLKAPVAGIAMGLVKSGEHYTILTDIQGMEDHLGDMDFKVAGTAKGVTALQMDIKIDGLSREILEEALQQAKVGRMHILNHMLSVIAEPRIELSAYAPKIITMAINPDKIRDVIGPSGKQINKIIEETGVKIDIEQDGTVFISSINQEMNEKAKKIIEDIVREVQVGEIYLGKVKRVEKFGAFVELFSGKDGLVHISELALERVGKVEDVVKIGDEISVKVIEIDKQGRVNLSRKVLLKEEQEKEAAKEEAAKEENAQEQQ</sequence>
<comment type="function">
    <text evidence="1">Involved in mRNA degradation. Catalyzes the phosphorolysis of single-stranded polyribonucleotides processively in the 3'- to 5'-direction.</text>
</comment>
<comment type="catalytic activity">
    <reaction evidence="1">
        <text>RNA(n+1) + phosphate = RNA(n) + a ribonucleoside 5'-diphosphate</text>
        <dbReference type="Rhea" id="RHEA:22096"/>
        <dbReference type="Rhea" id="RHEA-COMP:14527"/>
        <dbReference type="Rhea" id="RHEA-COMP:17342"/>
        <dbReference type="ChEBI" id="CHEBI:43474"/>
        <dbReference type="ChEBI" id="CHEBI:57930"/>
        <dbReference type="ChEBI" id="CHEBI:140395"/>
        <dbReference type="EC" id="2.7.7.8"/>
    </reaction>
</comment>
<comment type="cofactor">
    <cofactor evidence="1">
        <name>Mg(2+)</name>
        <dbReference type="ChEBI" id="CHEBI:18420"/>
    </cofactor>
</comment>
<comment type="subcellular location">
    <subcellularLocation>
        <location evidence="1">Cytoplasm</location>
    </subcellularLocation>
</comment>
<comment type="similarity">
    <text evidence="1">Belongs to the polyribonucleotide nucleotidyltransferase family.</text>
</comment>
<protein>
    <recommendedName>
        <fullName evidence="1">Polyribonucleotide nucleotidyltransferase</fullName>
        <ecNumber evidence="1">2.7.7.8</ecNumber>
    </recommendedName>
    <alternativeName>
        <fullName evidence="1">Polynucleotide phosphorylase</fullName>
        <shortName evidence="1">PNPase</shortName>
    </alternativeName>
</protein>
<dbReference type="EC" id="2.7.7.8" evidence="1"/>
<dbReference type="EMBL" id="CP000903">
    <property type="protein sequence ID" value="ABY44800.1"/>
    <property type="molecule type" value="Genomic_DNA"/>
</dbReference>
<dbReference type="RefSeq" id="WP_002033682.1">
    <property type="nucleotide sequence ID" value="NZ_CAKMRX030000111.1"/>
</dbReference>
<dbReference type="SMR" id="A9VT44"/>
<dbReference type="GeneID" id="66266629"/>
<dbReference type="KEGG" id="bwe:BcerKBAB4_3629"/>
<dbReference type="eggNOG" id="COG1185">
    <property type="taxonomic scope" value="Bacteria"/>
</dbReference>
<dbReference type="HOGENOM" id="CLU_004217_2_2_9"/>
<dbReference type="Proteomes" id="UP000002154">
    <property type="component" value="Chromosome"/>
</dbReference>
<dbReference type="GO" id="GO:0005829">
    <property type="term" value="C:cytosol"/>
    <property type="evidence" value="ECO:0007669"/>
    <property type="project" value="TreeGrafter"/>
</dbReference>
<dbReference type="GO" id="GO:0000175">
    <property type="term" value="F:3'-5'-RNA exonuclease activity"/>
    <property type="evidence" value="ECO:0007669"/>
    <property type="project" value="TreeGrafter"/>
</dbReference>
<dbReference type="GO" id="GO:0000287">
    <property type="term" value="F:magnesium ion binding"/>
    <property type="evidence" value="ECO:0007669"/>
    <property type="project" value="UniProtKB-UniRule"/>
</dbReference>
<dbReference type="GO" id="GO:0004654">
    <property type="term" value="F:polyribonucleotide nucleotidyltransferase activity"/>
    <property type="evidence" value="ECO:0007669"/>
    <property type="project" value="UniProtKB-UniRule"/>
</dbReference>
<dbReference type="GO" id="GO:0003723">
    <property type="term" value="F:RNA binding"/>
    <property type="evidence" value="ECO:0007669"/>
    <property type="project" value="UniProtKB-UniRule"/>
</dbReference>
<dbReference type="GO" id="GO:0006402">
    <property type="term" value="P:mRNA catabolic process"/>
    <property type="evidence" value="ECO:0007669"/>
    <property type="project" value="UniProtKB-UniRule"/>
</dbReference>
<dbReference type="GO" id="GO:0006396">
    <property type="term" value="P:RNA processing"/>
    <property type="evidence" value="ECO:0007669"/>
    <property type="project" value="InterPro"/>
</dbReference>
<dbReference type="CDD" id="cd02393">
    <property type="entry name" value="KH-I_PNPase"/>
    <property type="match status" value="1"/>
</dbReference>
<dbReference type="CDD" id="cd11363">
    <property type="entry name" value="RNase_PH_PNPase_1"/>
    <property type="match status" value="1"/>
</dbReference>
<dbReference type="CDD" id="cd11364">
    <property type="entry name" value="RNase_PH_PNPase_2"/>
    <property type="match status" value="1"/>
</dbReference>
<dbReference type="CDD" id="cd04472">
    <property type="entry name" value="S1_PNPase"/>
    <property type="match status" value="1"/>
</dbReference>
<dbReference type="FunFam" id="2.40.50.140:FF:000023">
    <property type="entry name" value="Polyribonucleotide nucleotidyltransferase"/>
    <property type="match status" value="1"/>
</dbReference>
<dbReference type="FunFam" id="3.30.1370.10:FF:000001">
    <property type="entry name" value="Polyribonucleotide nucleotidyltransferase"/>
    <property type="match status" value="1"/>
</dbReference>
<dbReference type="FunFam" id="3.30.230.70:FF:000001">
    <property type="entry name" value="Polyribonucleotide nucleotidyltransferase"/>
    <property type="match status" value="1"/>
</dbReference>
<dbReference type="FunFam" id="3.30.230.70:FF:000002">
    <property type="entry name" value="Polyribonucleotide nucleotidyltransferase"/>
    <property type="match status" value="1"/>
</dbReference>
<dbReference type="Gene3D" id="3.30.230.70">
    <property type="entry name" value="GHMP Kinase, N-terminal domain"/>
    <property type="match status" value="2"/>
</dbReference>
<dbReference type="Gene3D" id="3.30.1370.10">
    <property type="entry name" value="K Homology domain, type 1"/>
    <property type="match status" value="1"/>
</dbReference>
<dbReference type="Gene3D" id="2.40.50.140">
    <property type="entry name" value="Nucleic acid-binding proteins"/>
    <property type="match status" value="1"/>
</dbReference>
<dbReference type="HAMAP" id="MF_01595">
    <property type="entry name" value="PNPase"/>
    <property type="match status" value="1"/>
</dbReference>
<dbReference type="InterPro" id="IPR001247">
    <property type="entry name" value="ExoRNase_PH_dom1"/>
</dbReference>
<dbReference type="InterPro" id="IPR015847">
    <property type="entry name" value="ExoRNase_PH_dom2"/>
</dbReference>
<dbReference type="InterPro" id="IPR036345">
    <property type="entry name" value="ExoRNase_PH_dom2_sf"/>
</dbReference>
<dbReference type="InterPro" id="IPR004087">
    <property type="entry name" value="KH_dom"/>
</dbReference>
<dbReference type="InterPro" id="IPR004088">
    <property type="entry name" value="KH_dom_type_1"/>
</dbReference>
<dbReference type="InterPro" id="IPR036612">
    <property type="entry name" value="KH_dom_type_1_sf"/>
</dbReference>
<dbReference type="InterPro" id="IPR012340">
    <property type="entry name" value="NA-bd_OB-fold"/>
</dbReference>
<dbReference type="InterPro" id="IPR012162">
    <property type="entry name" value="PNPase"/>
</dbReference>
<dbReference type="InterPro" id="IPR027408">
    <property type="entry name" value="PNPase/RNase_PH_dom_sf"/>
</dbReference>
<dbReference type="InterPro" id="IPR015848">
    <property type="entry name" value="PNPase_PH_RNA-bd_bac/org-type"/>
</dbReference>
<dbReference type="InterPro" id="IPR020568">
    <property type="entry name" value="Ribosomal_Su5_D2-typ_SF"/>
</dbReference>
<dbReference type="InterPro" id="IPR003029">
    <property type="entry name" value="S1_domain"/>
</dbReference>
<dbReference type="NCBIfam" id="TIGR03591">
    <property type="entry name" value="polynuc_phos"/>
    <property type="match status" value="1"/>
</dbReference>
<dbReference type="NCBIfam" id="NF008805">
    <property type="entry name" value="PRK11824.1"/>
    <property type="match status" value="1"/>
</dbReference>
<dbReference type="PANTHER" id="PTHR11252">
    <property type="entry name" value="POLYRIBONUCLEOTIDE NUCLEOTIDYLTRANSFERASE"/>
    <property type="match status" value="1"/>
</dbReference>
<dbReference type="PANTHER" id="PTHR11252:SF0">
    <property type="entry name" value="POLYRIBONUCLEOTIDE NUCLEOTIDYLTRANSFERASE 1, MITOCHONDRIAL"/>
    <property type="match status" value="1"/>
</dbReference>
<dbReference type="Pfam" id="PF00013">
    <property type="entry name" value="KH_1"/>
    <property type="match status" value="1"/>
</dbReference>
<dbReference type="Pfam" id="PF03726">
    <property type="entry name" value="PNPase"/>
    <property type="match status" value="1"/>
</dbReference>
<dbReference type="Pfam" id="PF01138">
    <property type="entry name" value="RNase_PH"/>
    <property type="match status" value="2"/>
</dbReference>
<dbReference type="Pfam" id="PF03725">
    <property type="entry name" value="RNase_PH_C"/>
    <property type="match status" value="2"/>
</dbReference>
<dbReference type="Pfam" id="PF00575">
    <property type="entry name" value="S1"/>
    <property type="match status" value="1"/>
</dbReference>
<dbReference type="PIRSF" id="PIRSF005499">
    <property type="entry name" value="PNPase"/>
    <property type="match status" value="1"/>
</dbReference>
<dbReference type="SMART" id="SM00322">
    <property type="entry name" value="KH"/>
    <property type="match status" value="1"/>
</dbReference>
<dbReference type="SMART" id="SM00316">
    <property type="entry name" value="S1"/>
    <property type="match status" value="1"/>
</dbReference>
<dbReference type="SUPFAM" id="SSF54791">
    <property type="entry name" value="Eukaryotic type KH-domain (KH-domain type I)"/>
    <property type="match status" value="1"/>
</dbReference>
<dbReference type="SUPFAM" id="SSF50249">
    <property type="entry name" value="Nucleic acid-binding proteins"/>
    <property type="match status" value="1"/>
</dbReference>
<dbReference type="SUPFAM" id="SSF55666">
    <property type="entry name" value="Ribonuclease PH domain 2-like"/>
    <property type="match status" value="2"/>
</dbReference>
<dbReference type="SUPFAM" id="SSF54211">
    <property type="entry name" value="Ribosomal protein S5 domain 2-like"/>
    <property type="match status" value="2"/>
</dbReference>
<dbReference type="PROSITE" id="PS50084">
    <property type="entry name" value="KH_TYPE_1"/>
    <property type="match status" value="1"/>
</dbReference>
<dbReference type="PROSITE" id="PS50126">
    <property type="entry name" value="S1"/>
    <property type="match status" value="1"/>
</dbReference>
<keyword id="KW-0963">Cytoplasm</keyword>
<keyword id="KW-0460">Magnesium</keyword>
<keyword id="KW-0479">Metal-binding</keyword>
<keyword id="KW-0548">Nucleotidyltransferase</keyword>
<keyword id="KW-0694">RNA-binding</keyword>
<keyword id="KW-0808">Transferase</keyword>
<name>PNP_BACMK</name>
<gene>
    <name evidence="1" type="primary">pnp</name>
    <name type="ordered locus">BcerKBAB4_3629</name>
</gene>
<evidence type="ECO:0000255" key="1">
    <source>
        <dbReference type="HAMAP-Rule" id="MF_01595"/>
    </source>
</evidence>
<reference key="1">
    <citation type="journal article" date="2008" name="Chem. Biol. Interact.">
        <title>Extending the Bacillus cereus group genomics to putative food-borne pathogens of different toxicity.</title>
        <authorList>
            <person name="Lapidus A."/>
            <person name="Goltsman E."/>
            <person name="Auger S."/>
            <person name="Galleron N."/>
            <person name="Segurens B."/>
            <person name="Dossat C."/>
            <person name="Land M.L."/>
            <person name="Broussolle V."/>
            <person name="Brillard J."/>
            <person name="Guinebretiere M.-H."/>
            <person name="Sanchis V."/>
            <person name="Nguen-the C."/>
            <person name="Lereclus D."/>
            <person name="Richardson P."/>
            <person name="Wincker P."/>
            <person name="Weissenbach J."/>
            <person name="Ehrlich S.D."/>
            <person name="Sorokin A."/>
        </authorList>
    </citation>
    <scope>NUCLEOTIDE SEQUENCE [LARGE SCALE GENOMIC DNA]</scope>
    <source>
        <strain>KBAB4</strain>
    </source>
</reference>
<feature type="chain" id="PRO_1000147887" description="Polyribonucleotide nucleotidyltransferase">
    <location>
        <begin position="1"/>
        <end position="717"/>
    </location>
</feature>
<feature type="domain" description="KH" evidence="1">
    <location>
        <begin position="554"/>
        <end position="613"/>
    </location>
</feature>
<feature type="domain" description="S1 motif" evidence="1">
    <location>
        <begin position="623"/>
        <end position="691"/>
    </location>
</feature>
<feature type="binding site" evidence="1">
    <location>
        <position position="487"/>
    </location>
    <ligand>
        <name>Mg(2+)</name>
        <dbReference type="ChEBI" id="CHEBI:18420"/>
    </ligand>
</feature>
<feature type="binding site" evidence="1">
    <location>
        <position position="493"/>
    </location>
    <ligand>
        <name>Mg(2+)</name>
        <dbReference type="ChEBI" id="CHEBI:18420"/>
    </ligand>
</feature>
<accession>A9VT44</accession>
<organism>
    <name type="scientific">Bacillus mycoides (strain KBAB4)</name>
    <name type="common">Bacillus weihenstephanensis</name>
    <dbReference type="NCBI Taxonomy" id="315730"/>
    <lineage>
        <taxon>Bacteria</taxon>
        <taxon>Bacillati</taxon>
        <taxon>Bacillota</taxon>
        <taxon>Bacilli</taxon>
        <taxon>Bacillales</taxon>
        <taxon>Bacillaceae</taxon>
        <taxon>Bacillus</taxon>
        <taxon>Bacillus cereus group</taxon>
    </lineage>
</organism>
<proteinExistence type="inferred from homology"/>